<evidence type="ECO:0000255" key="1">
    <source>
        <dbReference type="HAMAP-Rule" id="MF_00600"/>
    </source>
</evidence>
<keyword id="KW-0067">ATP-binding</keyword>
<keyword id="KW-0143">Chaperone</keyword>
<keyword id="KW-0963">Cytoplasm</keyword>
<keyword id="KW-0413">Isomerase</keyword>
<keyword id="KW-0547">Nucleotide-binding</keyword>
<reference key="1">
    <citation type="journal article" date="2007" name="PLoS Genet.">
        <title>Patterns and implications of gene gain and loss in the evolution of Prochlorococcus.</title>
        <authorList>
            <person name="Kettler G.C."/>
            <person name="Martiny A.C."/>
            <person name="Huang K."/>
            <person name="Zucker J."/>
            <person name="Coleman M.L."/>
            <person name="Rodrigue S."/>
            <person name="Chen F."/>
            <person name="Lapidus A."/>
            <person name="Ferriera S."/>
            <person name="Johnson J."/>
            <person name="Steglich C."/>
            <person name="Church G.M."/>
            <person name="Richardson P."/>
            <person name="Chisholm S.W."/>
        </authorList>
    </citation>
    <scope>NUCLEOTIDE SEQUENCE [LARGE SCALE GENOMIC DNA]</scope>
    <source>
        <strain>NATL1A</strain>
    </source>
</reference>
<organism>
    <name type="scientific">Prochlorococcus marinus (strain NATL1A)</name>
    <dbReference type="NCBI Taxonomy" id="167555"/>
    <lineage>
        <taxon>Bacteria</taxon>
        <taxon>Bacillati</taxon>
        <taxon>Cyanobacteriota</taxon>
        <taxon>Cyanophyceae</taxon>
        <taxon>Synechococcales</taxon>
        <taxon>Prochlorococcaceae</taxon>
        <taxon>Prochlorococcus</taxon>
    </lineage>
</organism>
<name>CH602_PROM1</name>
<protein>
    <recommendedName>
        <fullName evidence="1">Chaperonin GroEL 2</fullName>
        <ecNumber evidence="1">5.6.1.7</ecNumber>
    </recommendedName>
    <alternativeName>
        <fullName evidence="1">60 kDa chaperonin 2</fullName>
    </alternativeName>
    <alternativeName>
        <fullName evidence="1">Chaperonin-60 2</fullName>
        <shortName evidence="1">Cpn60 2</shortName>
    </alternativeName>
</protein>
<accession>A2C4I2</accession>
<gene>
    <name evidence="1" type="primary">groEL2</name>
    <name evidence="1" type="synonym">groL2</name>
    <name type="ordered locus">NATL1_18361</name>
</gene>
<feature type="chain" id="PRO_0000332049" description="Chaperonin GroEL 2">
    <location>
        <begin position="1"/>
        <end position="543"/>
    </location>
</feature>
<feature type="binding site" evidence="1">
    <location>
        <begin position="29"/>
        <end position="32"/>
    </location>
    <ligand>
        <name>ATP</name>
        <dbReference type="ChEBI" id="CHEBI:30616"/>
    </ligand>
</feature>
<feature type="binding site" evidence="1">
    <location>
        <begin position="86"/>
        <end position="90"/>
    </location>
    <ligand>
        <name>ATP</name>
        <dbReference type="ChEBI" id="CHEBI:30616"/>
    </ligand>
</feature>
<feature type="binding site" evidence="1">
    <location>
        <position position="413"/>
    </location>
    <ligand>
        <name>ATP</name>
        <dbReference type="ChEBI" id="CHEBI:30616"/>
    </ligand>
</feature>
<feature type="binding site" evidence="1">
    <location>
        <begin position="479"/>
        <end position="481"/>
    </location>
    <ligand>
        <name>ATP</name>
        <dbReference type="ChEBI" id="CHEBI:30616"/>
    </ligand>
</feature>
<feature type="binding site" evidence="1">
    <location>
        <position position="495"/>
    </location>
    <ligand>
        <name>ATP</name>
        <dbReference type="ChEBI" id="CHEBI:30616"/>
    </ligand>
</feature>
<dbReference type="EC" id="5.6.1.7" evidence="1"/>
<dbReference type="EMBL" id="CP000553">
    <property type="protein sequence ID" value="ABM76392.1"/>
    <property type="molecule type" value="Genomic_DNA"/>
</dbReference>
<dbReference type="RefSeq" id="WP_011824379.1">
    <property type="nucleotide sequence ID" value="NC_008819.1"/>
</dbReference>
<dbReference type="SMR" id="A2C4I2"/>
<dbReference type="KEGG" id="pme:NATL1_18361"/>
<dbReference type="eggNOG" id="COG0459">
    <property type="taxonomic scope" value="Bacteria"/>
</dbReference>
<dbReference type="HOGENOM" id="CLU_016503_3_0_3"/>
<dbReference type="Proteomes" id="UP000002592">
    <property type="component" value="Chromosome"/>
</dbReference>
<dbReference type="GO" id="GO:0005737">
    <property type="term" value="C:cytoplasm"/>
    <property type="evidence" value="ECO:0007669"/>
    <property type="project" value="UniProtKB-SubCell"/>
</dbReference>
<dbReference type="GO" id="GO:0005524">
    <property type="term" value="F:ATP binding"/>
    <property type="evidence" value="ECO:0007669"/>
    <property type="project" value="UniProtKB-UniRule"/>
</dbReference>
<dbReference type="GO" id="GO:0140662">
    <property type="term" value="F:ATP-dependent protein folding chaperone"/>
    <property type="evidence" value="ECO:0007669"/>
    <property type="project" value="InterPro"/>
</dbReference>
<dbReference type="GO" id="GO:0016853">
    <property type="term" value="F:isomerase activity"/>
    <property type="evidence" value="ECO:0007669"/>
    <property type="project" value="UniProtKB-KW"/>
</dbReference>
<dbReference type="GO" id="GO:0051082">
    <property type="term" value="F:unfolded protein binding"/>
    <property type="evidence" value="ECO:0007669"/>
    <property type="project" value="UniProtKB-UniRule"/>
</dbReference>
<dbReference type="GO" id="GO:0042026">
    <property type="term" value="P:protein refolding"/>
    <property type="evidence" value="ECO:0007669"/>
    <property type="project" value="UniProtKB-UniRule"/>
</dbReference>
<dbReference type="CDD" id="cd03344">
    <property type="entry name" value="GroEL"/>
    <property type="match status" value="1"/>
</dbReference>
<dbReference type="FunFam" id="3.50.7.10:FF:000001">
    <property type="entry name" value="60 kDa chaperonin"/>
    <property type="match status" value="1"/>
</dbReference>
<dbReference type="Gene3D" id="3.50.7.10">
    <property type="entry name" value="GroEL"/>
    <property type="match status" value="1"/>
</dbReference>
<dbReference type="Gene3D" id="1.10.560.10">
    <property type="entry name" value="GroEL-like equatorial domain"/>
    <property type="match status" value="1"/>
</dbReference>
<dbReference type="Gene3D" id="3.30.260.10">
    <property type="entry name" value="TCP-1-like chaperonin intermediate domain"/>
    <property type="match status" value="1"/>
</dbReference>
<dbReference type="HAMAP" id="MF_00600">
    <property type="entry name" value="CH60"/>
    <property type="match status" value="1"/>
</dbReference>
<dbReference type="InterPro" id="IPR018370">
    <property type="entry name" value="Chaperonin_Cpn60_CS"/>
</dbReference>
<dbReference type="InterPro" id="IPR001844">
    <property type="entry name" value="Cpn60/GroEL"/>
</dbReference>
<dbReference type="InterPro" id="IPR002423">
    <property type="entry name" value="Cpn60/GroEL/TCP-1"/>
</dbReference>
<dbReference type="InterPro" id="IPR027409">
    <property type="entry name" value="GroEL-like_apical_dom_sf"/>
</dbReference>
<dbReference type="InterPro" id="IPR027413">
    <property type="entry name" value="GROEL-like_equatorial_sf"/>
</dbReference>
<dbReference type="InterPro" id="IPR027410">
    <property type="entry name" value="TCP-1-like_intermed_sf"/>
</dbReference>
<dbReference type="NCBIfam" id="TIGR02348">
    <property type="entry name" value="GroEL"/>
    <property type="match status" value="1"/>
</dbReference>
<dbReference type="NCBIfam" id="NF000592">
    <property type="entry name" value="PRK00013.1"/>
    <property type="match status" value="1"/>
</dbReference>
<dbReference type="NCBIfam" id="NF009487">
    <property type="entry name" value="PRK12849.1"/>
    <property type="match status" value="1"/>
</dbReference>
<dbReference type="NCBIfam" id="NF009488">
    <property type="entry name" value="PRK12850.1"/>
    <property type="match status" value="1"/>
</dbReference>
<dbReference type="NCBIfam" id="NF009489">
    <property type="entry name" value="PRK12851.1"/>
    <property type="match status" value="1"/>
</dbReference>
<dbReference type="PANTHER" id="PTHR45633">
    <property type="entry name" value="60 KDA HEAT SHOCK PROTEIN, MITOCHONDRIAL"/>
    <property type="match status" value="1"/>
</dbReference>
<dbReference type="Pfam" id="PF00118">
    <property type="entry name" value="Cpn60_TCP1"/>
    <property type="match status" value="1"/>
</dbReference>
<dbReference type="PRINTS" id="PR00298">
    <property type="entry name" value="CHAPERONIN60"/>
</dbReference>
<dbReference type="SUPFAM" id="SSF52029">
    <property type="entry name" value="GroEL apical domain-like"/>
    <property type="match status" value="1"/>
</dbReference>
<dbReference type="SUPFAM" id="SSF48592">
    <property type="entry name" value="GroEL equatorial domain-like"/>
    <property type="match status" value="2"/>
</dbReference>
<dbReference type="PROSITE" id="PS00296">
    <property type="entry name" value="CHAPERONINS_CPN60"/>
    <property type="match status" value="1"/>
</dbReference>
<proteinExistence type="inferred from homology"/>
<comment type="function">
    <text evidence="1">Together with its co-chaperonin GroES, plays an essential role in assisting protein folding. The GroEL-GroES system forms a nano-cage that allows encapsulation of the non-native substrate proteins and provides a physical environment optimized to promote and accelerate protein folding.</text>
</comment>
<comment type="catalytic activity">
    <reaction evidence="1">
        <text>ATP + H2O + a folded polypeptide = ADP + phosphate + an unfolded polypeptide.</text>
        <dbReference type="EC" id="5.6.1.7"/>
    </reaction>
</comment>
<comment type="subunit">
    <text evidence="1">Forms a cylinder of 14 subunits composed of two heptameric rings stacked back-to-back. Interacts with the co-chaperonin GroES.</text>
</comment>
<comment type="subcellular location">
    <subcellularLocation>
        <location evidence="1">Cytoplasm</location>
    </subcellularLocation>
</comment>
<comment type="similarity">
    <text evidence="1">Belongs to the chaperonin (HSP60) family.</text>
</comment>
<sequence>MAKRIIYNEQARRALERGIDILAESVAVTLGPKGRNVVLEKKFGAPQIINDGVTIAKEIELEDHIENTGVALIRQAASKTNDAAGDGTTTATVLAHAMVKAGLKNVAAGANAITLKKGIDKATDFLVEKIKDHSKPISDSNAIAQCGTIAAGNDEEVGKMIADAMDKVGKEGVISLEEGKSMTTELEVTEGMRFDKGYISPYFATDTERMEAVLDEPYILLTDKKIGLVQDLVPVLEQVAKTGKPLLIIAEDIEKEALATLVVNRLRGVLNVAAVKAPGFGDRRKAMLEDMAVLTNGQLITEDAGLKLENATLDMLGTSRRVTINKDTSTIVAEGNEVAVNARCEQIKKQMDETDSTYDKEKLQERLAKLSGGVAVVKVGAATETEMKDKKLRLEDAINATKAAVEEGIVPGGGTTLAHLAPALEDWSSTNLSGEELIGANIVEAALTSPLMRIAENAGANGAVVAENVKSKPVNDGYNAATGEYVDMLSAGIVDPAKVTRSGLQNAASIAGMVLTTECIVADLPEKKDSSPAGGGMGGDFDY</sequence>